<gene>
    <name evidence="1" type="primary">ppaC</name>
    <name type="ordered locus">SE_1602</name>
</gene>
<comment type="catalytic activity">
    <reaction evidence="1">
        <text>diphosphate + H2O = 2 phosphate + H(+)</text>
        <dbReference type="Rhea" id="RHEA:24576"/>
        <dbReference type="ChEBI" id="CHEBI:15377"/>
        <dbReference type="ChEBI" id="CHEBI:15378"/>
        <dbReference type="ChEBI" id="CHEBI:33019"/>
        <dbReference type="ChEBI" id="CHEBI:43474"/>
        <dbReference type="EC" id="3.6.1.1"/>
    </reaction>
</comment>
<comment type="cofactor">
    <cofactor evidence="1">
        <name>Mn(2+)</name>
        <dbReference type="ChEBI" id="CHEBI:29035"/>
    </cofactor>
    <text evidence="1">Binds 2 manganese ions per subunit.</text>
</comment>
<comment type="subcellular location">
    <subcellularLocation>
        <location evidence="1">Cytoplasm</location>
    </subcellularLocation>
</comment>
<comment type="similarity">
    <text evidence="1">Belongs to the PPase class C family.</text>
</comment>
<accession>Q8CNN7</accession>
<feature type="chain" id="PRO_0000158585" description="Probable manganese-dependent inorganic pyrophosphatase">
    <location>
        <begin position="1"/>
        <end position="309"/>
    </location>
</feature>
<feature type="binding site" evidence="1">
    <location>
        <position position="9"/>
    </location>
    <ligand>
        <name>Mn(2+)</name>
        <dbReference type="ChEBI" id="CHEBI:29035"/>
        <label>1</label>
    </ligand>
</feature>
<feature type="binding site" evidence="1">
    <location>
        <position position="13"/>
    </location>
    <ligand>
        <name>Mn(2+)</name>
        <dbReference type="ChEBI" id="CHEBI:29035"/>
        <label>1</label>
    </ligand>
</feature>
<feature type="binding site" evidence="1">
    <location>
        <position position="15"/>
    </location>
    <ligand>
        <name>Mn(2+)</name>
        <dbReference type="ChEBI" id="CHEBI:29035"/>
        <label>2</label>
    </ligand>
</feature>
<feature type="binding site" evidence="1">
    <location>
        <position position="75"/>
    </location>
    <ligand>
        <name>Mn(2+)</name>
        <dbReference type="ChEBI" id="CHEBI:29035"/>
        <label>1</label>
    </ligand>
</feature>
<feature type="binding site" evidence="1">
    <location>
        <position position="75"/>
    </location>
    <ligand>
        <name>Mn(2+)</name>
        <dbReference type="ChEBI" id="CHEBI:29035"/>
        <label>2</label>
    </ligand>
</feature>
<feature type="binding site" evidence="1">
    <location>
        <position position="97"/>
    </location>
    <ligand>
        <name>Mn(2+)</name>
        <dbReference type="ChEBI" id="CHEBI:29035"/>
        <label>2</label>
    </ligand>
</feature>
<feature type="binding site" evidence="1">
    <location>
        <position position="149"/>
    </location>
    <ligand>
        <name>Mn(2+)</name>
        <dbReference type="ChEBI" id="CHEBI:29035"/>
        <label>2</label>
    </ligand>
</feature>
<evidence type="ECO:0000255" key="1">
    <source>
        <dbReference type="HAMAP-Rule" id="MF_00207"/>
    </source>
</evidence>
<protein>
    <recommendedName>
        <fullName evidence="1">Probable manganese-dependent inorganic pyrophosphatase</fullName>
        <ecNumber evidence="1">3.6.1.1</ecNumber>
    </recommendedName>
    <alternativeName>
        <fullName evidence="1">Pyrophosphate phospho-hydrolase</fullName>
        <shortName evidence="1">PPase</shortName>
    </alternativeName>
</protein>
<sequence>MTKTFIFGHKNPDTDAISSALIMADFEQQTGNTEAKAYRLGEISAETQFALDYFNVEAPELLNEDLKGQDVILVDHNEFQQSADTISNATIKHVIDHHRISNFETAGPLYYRAEPVGCSATILYKMYKERGFEIKPEIAGLMISAIISDSLLFKSPTCTKEDVDAAQALKDIANVDLEAYGLEMLKAGASTTDKSAETLVNMDAKSFNMGDYVTRIAQVNTVDIDEVLDRKEEFEKVMLEMSANEKYDLFVLVVTDIINSDSKILVVGAEKDKVGEAFKVQLDDGMAFLSGVVSRKKQVVPQITEVLTQ</sequence>
<proteinExistence type="inferred from homology"/>
<organism>
    <name type="scientific">Staphylococcus epidermidis (strain ATCC 12228 / FDA PCI 1200)</name>
    <dbReference type="NCBI Taxonomy" id="176280"/>
    <lineage>
        <taxon>Bacteria</taxon>
        <taxon>Bacillati</taxon>
        <taxon>Bacillota</taxon>
        <taxon>Bacilli</taxon>
        <taxon>Bacillales</taxon>
        <taxon>Staphylococcaceae</taxon>
        <taxon>Staphylococcus</taxon>
    </lineage>
</organism>
<dbReference type="EC" id="3.6.1.1" evidence="1"/>
<dbReference type="EMBL" id="AE015929">
    <property type="protein sequence ID" value="AAO05201.1"/>
    <property type="molecule type" value="Genomic_DNA"/>
</dbReference>
<dbReference type="RefSeq" id="NP_765157.1">
    <property type="nucleotide sequence ID" value="NC_004461.1"/>
</dbReference>
<dbReference type="RefSeq" id="WP_001830428.1">
    <property type="nucleotide sequence ID" value="NZ_WBME01000010.1"/>
</dbReference>
<dbReference type="SMR" id="Q8CNN7"/>
<dbReference type="KEGG" id="sep:SE_1602"/>
<dbReference type="PATRIC" id="fig|176280.10.peg.1567"/>
<dbReference type="eggNOG" id="COG1227">
    <property type="taxonomic scope" value="Bacteria"/>
</dbReference>
<dbReference type="HOGENOM" id="CLU_025243_0_1_9"/>
<dbReference type="OrthoDB" id="9766150at2"/>
<dbReference type="Proteomes" id="UP000001411">
    <property type="component" value="Chromosome"/>
</dbReference>
<dbReference type="GO" id="GO:0005737">
    <property type="term" value="C:cytoplasm"/>
    <property type="evidence" value="ECO:0007669"/>
    <property type="project" value="UniProtKB-SubCell"/>
</dbReference>
<dbReference type="GO" id="GO:0004427">
    <property type="term" value="F:inorganic diphosphate phosphatase activity"/>
    <property type="evidence" value="ECO:0007669"/>
    <property type="project" value="UniProtKB-UniRule"/>
</dbReference>
<dbReference type="GO" id="GO:0030145">
    <property type="term" value="F:manganese ion binding"/>
    <property type="evidence" value="ECO:0007669"/>
    <property type="project" value="UniProtKB-UniRule"/>
</dbReference>
<dbReference type="FunFam" id="3.10.310.20:FF:000001">
    <property type="entry name" value="Probable manganese-dependent inorganic pyrophosphatase"/>
    <property type="match status" value="1"/>
</dbReference>
<dbReference type="FunFam" id="3.90.1640.10:FF:000001">
    <property type="entry name" value="Probable manganese-dependent inorganic pyrophosphatase"/>
    <property type="match status" value="1"/>
</dbReference>
<dbReference type="Gene3D" id="3.10.310.20">
    <property type="entry name" value="DHHA2 domain"/>
    <property type="match status" value="1"/>
</dbReference>
<dbReference type="Gene3D" id="3.90.1640.10">
    <property type="entry name" value="inorganic pyrophosphatase (n-terminal core)"/>
    <property type="match status" value="1"/>
</dbReference>
<dbReference type="HAMAP" id="MF_00207">
    <property type="entry name" value="PPase_C"/>
    <property type="match status" value="1"/>
</dbReference>
<dbReference type="InterPro" id="IPR001667">
    <property type="entry name" value="DDH_dom"/>
</dbReference>
<dbReference type="InterPro" id="IPR038763">
    <property type="entry name" value="DHH_sf"/>
</dbReference>
<dbReference type="InterPro" id="IPR004097">
    <property type="entry name" value="DHHA2"/>
</dbReference>
<dbReference type="InterPro" id="IPR038222">
    <property type="entry name" value="DHHA2_dom_sf"/>
</dbReference>
<dbReference type="InterPro" id="IPR022934">
    <property type="entry name" value="Mn-dep_inorganic_PyrPase"/>
</dbReference>
<dbReference type="NCBIfam" id="NF003877">
    <property type="entry name" value="PRK05427.1"/>
    <property type="match status" value="1"/>
</dbReference>
<dbReference type="PANTHER" id="PTHR12112">
    <property type="entry name" value="BNIP - RELATED"/>
    <property type="match status" value="1"/>
</dbReference>
<dbReference type="PANTHER" id="PTHR12112:SF22">
    <property type="entry name" value="MANGANESE-DEPENDENT INORGANIC PYROPHOSPHATASE-RELATED"/>
    <property type="match status" value="1"/>
</dbReference>
<dbReference type="Pfam" id="PF01368">
    <property type="entry name" value="DHH"/>
    <property type="match status" value="1"/>
</dbReference>
<dbReference type="Pfam" id="PF02833">
    <property type="entry name" value="DHHA2"/>
    <property type="match status" value="1"/>
</dbReference>
<dbReference type="SMART" id="SM01131">
    <property type="entry name" value="DHHA2"/>
    <property type="match status" value="1"/>
</dbReference>
<dbReference type="SUPFAM" id="SSF64182">
    <property type="entry name" value="DHH phosphoesterases"/>
    <property type="match status" value="1"/>
</dbReference>
<reference key="1">
    <citation type="journal article" date="2003" name="Mol. Microbiol.">
        <title>Genome-based analysis of virulence genes in a non-biofilm-forming Staphylococcus epidermidis strain (ATCC 12228).</title>
        <authorList>
            <person name="Zhang Y.-Q."/>
            <person name="Ren S.-X."/>
            <person name="Li H.-L."/>
            <person name="Wang Y.-X."/>
            <person name="Fu G."/>
            <person name="Yang J."/>
            <person name="Qin Z.-Q."/>
            <person name="Miao Y.-G."/>
            <person name="Wang W.-Y."/>
            <person name="Chen R.-S."/>
            <person name="Shen Y."/>
            <person name="Chen Z."/>
            <person name="Yuan Z.-H."/>
            <person name="Zhao G.-P."/>
            <person name="Qu D."/>
            <person name="Danchin A."/>
            <person name="Wen Y.-M."/>
        </authorList>
    </citation>
    <scope>NUCLEOTIDE SEQUENCE [LARGE SCALE GENOMIC DNA]</scope>
    <source>
        <strain>ATCC 12228 / FDA PCI 1200</strain>
    </source>
</reference>
<keyword id="KW-0963">Cytoplasm</keyword>
<keyword id="KW-0378">Hydrolase</keyword>
<keyword id="KW-0464">Manganese</keyword>
<keyword id="KW-0479">Metal-binding</keyword>
<name>PPAC_STAES</name>